<name>HCN3_MOUSE</name>
<evidence type="ECO:0000250" key="1"/>
<evidence type="ECO:0000250" key="2">
    <source>
        <dbReference type="UniProtKB" id="O60741"/>
    </source>
</evidence>
<evidence type="ECO:0000250" key="3">
    <source>
        <dbReference type="UniProtKB" id="O88704"/>
    </source>
</evidence>
<evidence type="ECO:0000250" key="4">
    <source>
        <dbReference type="UniProtKB" id="Q9P1Z3"/>
    </source>
</evidence>
<evidence type="ECO:0000250" key="5">
    <source>
        <dbReference type="UniProtKB" id="Q9UL51"/>
    </source>
</evidence>
<evidence type="ECO:0000255" key="6"/>
<evidence type="ECO:0000256" key="7">
    <source>
        <dbReference type="SAM" id="MobiDB-lite"/>
    </source>
</evidence>
<evidence type="ECO:0000269" key="8">
    <source>
    </source>
</evidence>
<evidence type="ECO:0000269" key="9">
    <source>
    </source>
</evidence>
<evidence type="ECO:0000269" key="10">
    <source>
    </source>
</evidence>
<evidence type="ECO:0000269" key="11">
    <source>
    </source>
</evidence>
<evidence type="ECO:0000269" key="12">
    <source>
    </source>
</evidence>
<evidence type="ECO:0000269" key="13">
    <source>
    </source>
</evidence>
<evidence type="ECO:0000269" key="14">
    <source>
    </source>
</evidence>
<evidence type="ECO:0000305" key="15"/>
<evidence type="ECO:0000305" key="16">
    <source>
    </source>
</evidence>
<evidence type="ECO:0007744" key="17">
    <source>
    </source>
</evidence>
<proteinExistence type="evidence at protein level"/>
<sequence length="779" mass="86641">MEEEARPAAGAGEAATPARETPPAAPAQARAASGGVPESAPEPKRRQLGTLLQPTVNKFSLRVFGSHKAVEIEQERVKSAGAWIIHPYSDFRFYWDLIMLLLMVGNLIVLPVGITFFKEENSPPWIVFNVLSDTFFLLDLVLNFRTGIVVEEGAEILLAPRAIRTRYLRTWFLVDLISSIPVDYIFLVVELEPRLDAEVYKTARALRIVRFTKILSLLRLLRLSRLIRYIHQWEEIFHMTYDLASAVVRIFNLIGMMLLLCHWDGCLQFLVPMLQDFPSDCWVSMNRMVNHSWGRQYSHALFKAMSHMLCIGYGQQAPVGMPDVWLTMLSMIVGATCYAMFIGHATALIQSLDSSRRQYQEKYKQVEQYMSFHKLPADTRQRIHEYYEHRYQGKMFDEESILGELSEPLREEIINFTCRGLVAHMPLFAHADPSFVTAVLTKLRFEVFQPGDLVVREGSVGRKMYFIQHGLLSVLARGARDTRLTDGSYFGEICLLTRGRRTASVRADTYCRLYSLSVDHFNAVLEEFPMMRRAFETVAMDRLRRIGKKNSILQRKRSEPSPGSSGGVMEQHLVQHDRDMARGVRGLAPGTGARLSGKPVLWEPLVHAPLQAAAVTSNVAIALTHQRGPLPLSPDSPATLLARSARRSAGSPASPLVPVRAGPLLARGPWASTSRLPAPPARTLHASLSRTGRSQVSLLGPPPGGGARRLGPRGRPLSASQPSLPQRATGDGSPRRKGSGSERLPPSGLLAKPPGTVQPPRSSVPEPVTPRGPQISANM</sequence>
<organism>
    <name type="scientific">Mus musculus</name>
    <name type="common">Mouse</name>
    <dbReference type="NCBI Taxonomy" id="10090"/>
    <lineage>
        <taxon>Eukaryota</taxon>
        <taxon>Metazoa</taxon>
        <taxon>Chordata</taxon>
        <taxon>Craniata</taxon>
        <taxon>Vertebrata</taxon>
        <taxon>Euteleostomi</taxon>
        <taxon>Mammalia</taxon>
        <taxon>Eutheria</taxon>
        <taxon>Euarchontoglires</taxon>
        <taxon>Glires</taxon>
        <taxon>Rodentia</taxon>
        <taxon>Myomorpha</taxon>
        <taxon>Muroidea</taxon>
        <taxon>Muridae</taxon>
        <taxon>Murinae</taxon>
        <taxon>Mus</taxon>
        <taxon>Mus</taxon>
    </lineage>
</organism>
<reference key="1">
    <citation type="journal article" date="1998" name="Nature">
        <title>A family of hyperpolarization-activated cation channels.</title>
        <authorList>
            <person name="Ludwig A."/>
            <person name="Zong X."/>
            <person name="Jeglitsch M."/>
            <person name="Hofmann F."/>
            <person name="Biel M."/>
        </authorList>
    </citation>
    <scope>NUCLEOTIDE SEQUENCE [MRNA]</scope>
    <source>
        <strain>BALB/cJ</strain>
    </source>
</reference>
<reference key="2">
    <citation type="journal article" date="2005" name="Science">
        <title>The transcriptional landscape of the mammalian genome.</title>
        <authorList>
            <person name="Carninci P."/>
            <person name="Kasukawa T."/>
            <person name="Katayama S."/>
            <person name="Gough J."/>
            <person name="Frith M.C."/>
            <person name="Maeda N."/>
            <person name="Oyama R."/>
            <person name="Ravasi T."/>
            <person name="Lenhard B."/>
            <person name="Wells C."/>
            <person name="Kodzius R."/>
            <person name="Shimokawa K."/>
            <person name="Bajic V.B."/>
            <person name="Brenner S.E."/>
            <person name="Batalov S."/>
            <person name="Forrest A.R."/>
            <person name="Zavolan M."/>
            <person name="Davis M.J."/>
            <person name="Wilming L.G."/>
            <person name="Aidinis V."/>
            <person name="Allen J.E."/>
            <person name="Ambesi-Impiombato A."/>
            <person name="Apweiler R."/>
            <person name="Aturaliya R.N."/>
            <person name="Bailey T.L."/>
            <person name="Bansal M."/>
            <person name="Baxter L."/>
            <person name="Beisel K.W."/>
            <person name="Bersano T."/>
            <person name="Bono H."/>
            <person name="Chalk A.M."/>
            <person name="Chiu K.P."/>
            <person name="Choudhary V."/>
            <person name="Christoffels A."/>
            <person name="Clutterbuck D.R."/>
            <person name="Crowe M.L."/>
            <person name="Dalla E."/>
            <person name="Dalrymple B.P."/>
            <person name="de Bono B."/>
            <person name="Della Gatta G."/>
            <person name="di Bernardo D."/>
            <person name="Down T."/>
            <person name="Engstrom P."/>
            <person name="Fagiolini M."/>
            <person name="Faulkner G."/>
            <person name="Fletcher C.F."/>
            <person name="Fukushima T."/>
            <person name="Furuno M."/>
            <person name="Futaki S."/>
            <person name="Gariboldi M."/>
            <person name="Georgii-Hemming P."/>
            <person name="Gingeras T.R."/>
            <person name="Gojobori T."/>
            <person name="Green R.E."/>
            <person name="Gustincich S."/>
            <person name="Harbers M."/>
            <person name="Hayashi Y."/>
            <person name="Hensch T.K."/>
            <person name="Hirokawa N."/>
            <person name="Hill D."/>
            <person name="Huminiecki L."/>
            <person name="Iacono M."/>
            <person name="Ikeo K."/>
            <person name="Iwama A."/>
            <person name="Ishikawa T."/>
            <person name="Jakt M."/>
            <person name="Kanapin A."/>
            <person name="Katoh M."/>
            <person name="Kawasawa Y."/>
            <person name="Kelso J."/>
            <person name="Kitamura H."/>
            <person name="Kitano H."/>
            <person name="Kollias G."/>
            <person name="Krishnan S.P."/>
            <person name="Kruger A."/>
            <person name="Kummerfeld S.K."/>
            <person name="Kurochkin I.V."/>
            <person name="Lareau L.F."/>
            <person name="Lazarevic D."/>
            <person name="Lipovich L."/>
            <person name="Liu J."/>
            <person name="Liuni S."/>
            <person name="McWilliam S."/>
            <person name="Madan Babu M."/>
            <person name="Madera M."/>
            <person name="Marchionni L."/>
            <person name="Matsuda H."/>
            <person name="Matsuzawa S."/>
            <person name="Miki H."/>
            <person name="Mignone F."/>
            <person name="Miyake S."/>
            <person name="Morris K."/>
            <person name="Mottagui-Tabar S."/>
            <person name="Mulder N."/>
            <person name="Nakano N."/>
            <person name="Nakauchi H."/>
            <person name="Ng P."/>
            <person name="Nilsson R."/>
            <person name="Nishiguchi S."/>
            <person name="Nishikawa S."/>
            <person name="Nori F."/>
            <person name="Ohara O."/>
            <person name="Okazaki Y."/>
            <person name="Orlando V."/>
            <person name="Pang K.C."/>
            <person name="Pavan W.J."/>
            <person name="Pavesi G."/>
            <person name="Pesole G."/>
            <person name="Petrovsky N."/>
            <person name="Piazza S."/>
            <person name="Reed J."/>
            <person name="Reid J.F."/>
            <person name="Ring B.Z."/>
            <person name="Ringwald M."/>
            <person name="Rost B."/>
            <person name="Ruan Y."/>
            <person name="Salzberg S.L."/>
            <person name="Sandelin A."/>
            <person name="Schneider C."/>
            <person name="Schoenbach C."/>
            <person name="Sekiguchi K."/>
            <person name="Semple C.A."/>
            <person name="Seno S."/>
            <person name="Sessa L."/>
            <person name="Sheng Y."/>
            <person name="Shibata Y."/>
            <person name="Shimada H."/>
            <person name="Shimada K."/>
            <person name="Silva D."/>
            <person name="Sinclair B."/>
            <person name="Sperling S."/>
            <person name="Stupka E."/>
            <person name="Sugiura K."/>
            <person name="Sultana R."/>
            <person name="Takenaka Y."/>
            <person name="Taki K."/>
            <person name="Tammoja K."/>
            <person name="Tan S.L."/>
            <person name="Tang S."/>
            <person name="Taylor M.S."/>
            <person name="Tegner J."/>
            <person name="Teichmann S.A."/>
            <person name="Ueda H.R."/>
            <person name="van Nimwegen E."/>
            <person name="Verardo R."/>
            <person name="Wei C.L."/>
            <person name="Yagi K."/>
            <person name="Yamanishi H."/>
            <person name="Zabarovsky E."/>
            <person name="Zhu S."/>
            <person name="Zimmer A."/>
            <person name="Hide W."/>
            <person name="Bult C."/>
            <person name="Grimmond S.M."/>
            <person name="Teasdale R.D."/>
            <person name="Liu E.T."/>
            <person name="Brusic V."/>
            <person name="Quackenbush J."/>
            <person name="Wahlestedt C."/>
            <person name="Mattick J.S."/>
            <person name="Hume D.A."/>
            <person name="Kai C."/>
            <person name="Sasaki D."/>
            <person name="Tomaru Y."/>
            <person name="Fukuda S."/>
            <person name="Kanamori-Katayama M."/>
            <person name="Suzuki M."/>
            <person name="Aoki J."/>
            <person name="Arakawa T."/>
            <person name="Iida J."/>
            <person name="Imamura K."/>
            <person name="Itoh M."/>
            <person name="Kato T."/>
            <person name="Kawaji H."/>
            <person name="Kawagashira N."/>
            <person name="Kawashima T."/>
            <person name="Kojima M."/>
            <person name="Kondo S."/>
            <person name="Konno H."/>
            <person name="Nakano K."/>
            <person name="Ninomiya N."/>
            <person name="Nishio T."/>
            <person name="Okada M."/>
            <person name="Plessy C."/>
            <person name="Shibata K."/>
            <person name="Shiraki T."/>
            <person name="Suzuki S."/>
            <person name="Tagami M."/>
            <person name="Waki K."/>
            <person name="Watahiki A."/>
            <person name="Okamura-Oho Y."/>
            <person name="Suzuki H."/>
            <person name="Kawai J."/>
            <person name="Hayashizaki Y."/>
        </authorList>
    </citation>
    <scope>NUCLEOTIDE SEQUENCE [LARGE SCALE MRNA]</scope>
    <source>
        <strain>C57BL/6J</strain>
        <tissue>Olfactory bulb</tissue>
    </source>
</reference>
<reference key="3">
    <citation type="journal article" date="2004" name="Genome Res.">
        <title>The status, quality, and expansion of the NIH full-length cDNA project: the Mammalian Gene Collection (MGC).</title>
        <authorList>
            <consortium name="The MGC Project Team"/>
        </authorList>
    </citation>
    <scope>NUCLEOTIDE SEQUENCE [LARGE SCALE MRNA]</scope>
    <source>
        <tissue>Eye</tissue>
    </source>
</reference>
<reference key="4">
    <citation type="journal article" date="1998" name="Cell">
        <title>Identification of a gene encoding a hyperpolarization-activated 'pacemaker' channel of brain.</title>
        <authorList>
            <person name="Santoro B."/>
            <person name="Liu D.T."/>
            <person name="Yao H."/>
            <person name="Bartsch D."/>
            <person name="Kandel E.R."/>
            <person name="Siegelbaum S.A."/>
            <person name="Tibbs G.R."/>
        </authorList>
    </citation>
    <scope>TISSUE SPECIFICITY</scope>
</reference>
<reference key="5">
    <citation type="journal article" date="2003" name="J. Biol. Chem.">
        <title>Role of subunit heteromerization and N-linked glycosylation in the formation of functional hyperpolarization-activated cyclic nucleotide-gated channels.</title>
        <authorList>
            <person name="Much B."/>
            <person name="Wahl-Schott C."/>
            <person name="Zong X."/>
            <person name="Schneider A."/>
            <person name="Baumann L."/>
            <person name="Moosmang S."/>
            <person name="Ludwig A."/>
            <person name="Biel M."/>
        </authorList>
    </citation>
    <scope>SUBCELLULAR LOCATION</scope>
    <scope>INTERACTION WITH HCN1</scope>
</reference>
<reference key="6">
    <citation type="journal article" date="2005" name="J. Biol. Chem.">
        <title>The murine HCN3 gene encodes a hyperpolarization-activated cation channel with slow kinetics and unique response to cyclic nucleotides.</title>
        <authorList>
            <person name="Mistrik P."/>
            <person name="Mader R."/>
            <person name="Michalakis S."/>
            <person name="Weidinger M."/>
            <person name="Pfeifer A."/>
            <person name="Biel M."/>
        </authorList>
    </citation>
    <scope>FUNCTION</scope>
    <scope>SUBCELLULAR LOCATION</scope>
    <scope>ACTIVITY REGULATION</scope>
    <scope>TISSUE SPECIFICITY</scope>
</reference>
<reference key="7">
    <citation type="journal article" date="2010" name="Cell">
        <title>A tissue-specific atlas of mouse protein phosphorylation and expression.</title>
        <authorList>
            <person name="Huttlin E.L."/>
            <person name="Jedrychowski M.P."/>
            <person name="Elias J.E."/>
            <person name="Goswami T."/>
            <person name="Rad R."/>
            <person name="Beausoleil S.A."/>
            <person name="Villen J."/>
            <person name="Haas W."/>
            <person name="Sowa M.E."/>
            <person name="Gygi S.P."/>
        </authorList>
    </citation>
    <scope>PHOSPHORYLATION [LARGE SCALE ANALYSIS] AT SER-633</scope>
    <scope>IDENTIFICATION BY MASS SPECTROMETRY [LARGE SCALE ANALYSIS]</scope>
    <source>
        <tissue>Brain</tissue>
    </source>
</reference>
<reference key="8">
    <citation type="journal article" date="2011" name="Circ. Res.">
        <title>HCN3 contributes to the ventricular action potential waveform in the murine heart.</title>
        <authorList>
            <person name="Fenske S."/>
            <person name="Mader R."/>
            <person name="Scharr A."/>
            <person name="Paparizos C."/>
            <person name="Cao-Ehlker X."/>
            <person name="Michalakis S."/>
            <person name="Shaltiel L."/>
            <person name="Weidinger M."/>
            <person name="Stieber J."/>
            <person name="Feil S."/>
            <person name="Feil R."/>
            <person name="Hofmann F."/>
            <person name="Wahl-Schott C."/>
            <person name="Biel M."/>
        </authorList>
    </citation>
    <scope>DISRUPTION PHENOTYPE</scope>
    <scope>FUNCTION</scope>
</reference>
<reference key="9">
    <citation type="journal article" date="2011" name="J. Neurosci.">
        <title>PIP2-mediated HCN3 channel gating is crucial for rhythmic burst firing in thalamic intergeniculate leaflet neurons.</title>
        <authorList>
            <person name="Ying S.W."/>
            <person name="Tibbs G.R."/>
            <person name="Picollo A."/>
            <person name="Abbas S.Y."/>
            <person name="Sanford R.L."/>
            <person name="Accardi A."/>
            <person name="Hofmann F."/>
            <person name="Ludwig A."/>
            <person name="Goldstein P.A."/>
        </authorList>
    </citation>
    <scope>FUNCTION</scope>
    <scope>ACTIVITY REGULATION</scope>
</reference>
<reference key="10">
    <citation type="journal article" date="2013" name="J. Biol. Chem.">
        <title>Up-regulation of hyperpolarization-activated cyclic nucleotide-gated channel 3 (HCN3) by specific interaction with K+ channel tetramerization domain-containing protein 3 (KCTD3).</title>
        <authorList>
            <person name="Cao-Ehlker X."/>
            <person name="Zong X."/>
            <person name="Hammelmann V."/>
            <person name="Gruner C."/>
            <person name="Fenske S."/>
            <person name="Michalakis S."/>
            <person name="Wahl-Schott C."/>
            <person name="Biel M."/>
        </authorList>
    </citation>
    <scope>INTERACTION WITH KCTD3 AND PEX5L</scope>
    <scope>SUBCELLULAR LOCATION</scope>
    <scope>TISSUE SPECIFICITY</scope>
</reference>
<reference key="11">
    <citation type="journal article" date="2019" name="J. Physiol. (Lond.)">
        <title>HCN3 ion channels: roles in sensory neuronal excitability and pain.</title>
        <authorList>
            <person name="Lainez S."/>
            <person name="Tsantoulas C."/>
            <person name="Biel M."/>
            <person name="McNaughton P.A."/>
        </authorList>
    </citation>
    <scope>TISSUE SPECIFICITY</scope>
    <scope>FUNCTION</scope>
    <scope>DISRUPTION PHENOTYPE</scope>
</reference>
<gene>
    <name type="primary">Hcn3</name>
    <name type="synonym">Hac3</name>
</gene>
<dbReference type="EMBL" id="AJ225124">
    <property type="protein sequence ID" value="CAA12408.1"/>
    <property type="molecule type" value="mRNA"/>
</dbReference>
<dbReference type="EMBL" id="AK032225">
    <property type="protein sequence ID" value="BAC27769.1"/>
    <property type="molecule type" value="mRNA"/>
</dbReference>
<dbReference type="EMBL" id="BC039156">
    <property type="protein sequence ID" value="AAH39156.1"/>
    <property type="molecule type" value="mRNA"/>
</dbReference>
<dbReference type="CCDS" id="CCDS17490.1"/>
<dbReference type="RefSeq" id="NP_032253.1">
    <property type="nucleotide sequence ID" value="NM_008227.2"/>
</dbReference>
<dbReference type="SMR" id="O88705"/>
<dbReference type="BioGRID" id="200254">
    <property type="interactions" value="5"/>
</dbReference>
<dbReference type="ComplexPortal" id="CPX-270">
    <property type="entry name" value="HCN3 channel complex"/>
</dbReference>
<dbReference type="FunCoup" id="O88705">
    <property type="interactions" value="114"/>
</dbReference>
<dbReference type="IntAct" id="O88705">
    <property type="interactions" value="1"/>
</dbReference>
<dbReference type="STRING" id="10090.ENSMUSP00000029686"/>
<dbReference type="GlyCosmos" id="O88705">
    <property type="glycosylation" value="1 site, No reported glycans"/>
</dbReference>
<dbReference type="GlyGen" id="O88705">
    <property type="glycosylation" value="2 sites, 1 N-linked glycan (1 site)"/>
</dbReference>
<dbReference type="iPTMnet" id="O88705"/>
<dbReference type="PhosphoSitePlus" id="O88705"/>
<dbReference type="PaxDb" id="10090-ENSMUSP00000029686"/>
<dbReference type="ProteomicsDB" id="270952"/>
<dbReference type="ABCD" id="O88705">
    <property type="antibodies" value="1 sequenced antibody"/>
</dbReference>
<dbReference type="Antibodypedia" id="20417">
    <property type="antibodies" value="291 antibodies from 36 providers"/>
</dbReference>
<dbReference type="DNASU" id="15168"/>
<dbReference type="Ensembl" id="ENSMUST00000029686.4">
    <property type="protein sequence ID" value="ENSMUSP00000029686.4"/>
    <property type="gene ID" value="ENSMUSG00000028051.11"/>
</dbReference>
<dbReference type="GeneID" id="15168"/>
<dbReference type="KEGG" id="mmu:15168"/>
<dbReference type="UCSC" id="uc008pxr.1">
    <property type="organism name" value="mouse"/>
</dbReference>
<dbReference type="AGR" id="MGI:1298211"/>
<dbReference type="CTD" id="57657"/>
<dbReference type="MGI" id="MGI:1298211">
    <property type="gene designation" value="Hcn3"/>
</dbReference>
<dbReference type="VEuPathDB" id="HostDB:ENSMUSG00000028051"/>
<dbReference type="eggNOG" id="KOG0498">
    <property type="taxonomic scope" value="Eukaryota"/>
</dbReference>
<dbReference type="GeneTree" id="ENSGT00940000162023"/>
<dbReference type="HOGENOM" id="CLU_005746_15_1_1"/>
<dbReference type="InParanoid" id="O88705"/>
<dbReference type="OMA" id="HMANHSW"/>
<dbReference type="OrthoDB" id="421226at2759"/>
<dbReference type="PhylomeDB" id="O88705"/>
<dbReference type="TreeFam" id="TF318250"/>
<dbReference type="Reactome" id="R-MMU-1296061">
    <property type="pathway name" value="HCN channels"/>
</dbReference>
<dbReference type="BioGRID-ORCS" id="15168">
    <property type="hits" value="3 hits in 77 CRISPR screens"/>
</dbReference>
<dbReference type="ChiTaRS" id="Hcn3">
    <property type="organism name" value="mouse"/>
</dbReference>
<dbReference type="PRO" id="PR:O88705"/>
<dbReference type="Proteomes" id="UP000000589">
    <property type="component" value="Chromosome 3"/>
</dbReference>
<dbReference type="RNAct" id="O88705">
    <property type="molecule type" value="protein"/>
</dbReference>
<dbReference type="Bgee" id="ENSMUSG00000028051">
    <property type="expression patterns" value="Expressed in embryonic brain and 103 other cell types or tissues"/>
</dbReference>
<dbReference type="ExpressionAtlas" id="O88705">
    <property type="expression patterns" value="baseline and differential"/>
</dbReference>
<dbReference type="GO" id="GO:0098855">
    <property type="term" value="C:HCN channel complex"/>
    <property type="evidence" value="ECO:0007669"/>
    <property type="project" value="Ensembl"/>
</dbReference>
<dbReference type="GO" id="GO:0016020">
    <property type="term" value="C:membrane"/>
    <property type="evidence" value="ECO:0000314"/>
    <property type="project" value="MGI"/>
</dbReference>
<dbReference type="GO" id="GO:0005886">
    <property type="term" value="C:plasma membrane"/>
    <property type="evidence" value="ECO:0000314"/>
    <property type="project" value="UniProtKB"/>
</dbReference>
<dbReference type="GO" id="GO:0030552">
    <property type="term" value="F:cAMP binding"/>
    <property type="evidence" value="ECO:0007669"/>
    <property type="project" value="UniProtKB-KW"/>
</dbReference>
<dbReference type="GO" id="GO:0005249">
    <property type="term" value="F:voltage-gated potassium channel activity"/>
    <property type="evidence" value="ECO:0000314"/>
    <property type="project" value="UniProtKB"/>
</dbReference>
<dbReference type="GO" id="GO:0005248">
    <property type="term" value="F:voltage-gated sodium channel activity"/>
    <property type="evidence" value="ECO:0007669"/>
    <property type="project" value="Ensembl"/>
</dbReference>
<dbReference type="GO" id="GO:0071320">
    <property type="term" value="P:cellular response to cAMP"/>
    <property type="evidence" value="ECO:0007669"/>
    <property type="project" value="Ensembl"/>
</dbReference>
<dbReference type="GO" id="GO:0071805">
    <property type="term" value="P:potassium ion transmembrane transport"/>
    <property type="evidence" value="ECO:0000314"/>
    <property type="project" value="UniProtKB"/>
</dbReference>
<dbReference type="GO" id="GO:0003254">
    <property type="term" value="P:regulation of membrane depolarization"/>
    <property type="evidence" value="ECO:0007669"/>
    <property type="project" value="Ensembl"/>
</dbReference>
<dbReference type="CDD" id="cd00038">
    <property type="entry name" value="CAP_ED"/>
    <property type="match status" value="1"/>
</dbReference>
<dbReference type="FunFam" id="1.10.287.70:FF:000031">
    <property type="entry name" value="Potassium/sodium hyperpolarization-activated cyclic nucleotide-gated channel 1, putative"/>
    <property type="match status" value="1"/>
</dbReference>
<dbReference type="FunFam" id="1.10.287.630:FF:000002">
    <property type="entry name" value="Potassium/sodium hyperpolarization-activated cyclic nucleotide-gated channel 4"/>
    <property type="match status" value="1"/>
</dbReference>
<dbReference type="FunFam" id="2.60.120.10:FF:000007">
    <property type="entry name" value="Putative potassium/sodium hyperpolarization-activated cyclic nucleotide-gated channel 2"/>
    <property type="match status" value="1"/>
</dbReference>
<dbReference type="Gene3D" id="1.10.287.70">
    <property type="match status" value="1"/>
</dbReference>
<dbReference type="Gene3D" id="1.10.287.630">
    <property type="entry name" value="Helix hairpin bin"/>
    <property type="match status" value="1"/>
</dbReference>
<dbReference type="Gene3D" id="2.60.120.10">
    <property type="entry name" value="Jelly Rolls"/>
    <property type="match status" value="1"/>
</dbReference>
<dbReference type="InterPro" id="IPR000595">
    <property type="entry name" value="cNMP-bd_dom"/>
</dbReference>
<dbReference type="InterPro" id="IPR018490">
    <property type="entry name" value="cNMP-bd_dom_sf"/>
</dbReference>
<dbReference type="InterPro" id="IPR005821">
    <property type="entry name" value="Ion_trans_dom"/>
</dbReference>
<dbReference type="InterPro" id="IPR013621">
    <property type="entry name" value="Ion_trans_N"/>
</dbReference>
<dbReference type="InterPro" id="IPR051413">
    <property type="entry name" value="K/Na_HCN_channel"/>
</dbReference>
<dbReference type="InterPro" id="IPR003938">
    <property type="entry name" value="K_chnl_volt-dep_EAG/ELK/ERG"/>
</dbReference>
<dbReference type="InterPro" id="IPR014710">
    <property type="entry name" value="RmlC-like_jellyroll"/>
</dbReference>
<dbReference type="PANTHER" id="PTHR45689">
    <property type="entry name" value="I[[H]] CHANNEL, ISOFORM E"/>
    <property type="match status" value="1"/>
</dbReference>
<dbReference type="PANTHER" id="PTHR45689:SF7">
    <property type="entry name" value="POTASSIUM_SODIUM HYPERPOLARIZATION-ACTIVATED CYCLIC NUCLEOTIDE-GATED CHANNEL 3"/>
    <property type="match status" value="1"/>
</dbReference>
<dbReference type="Pfam" id="PF00027">
    <property type="entry name" value="cNMP_binding"/>
    <property type="match status" value="1"/>
</dbReference>
<dbReference type="Pfam" id="PF00520">
    <property type="entry name" value="Ion_trans"/>
    <property type="match status" value="1"/>
</dbReference>
<dbReference type="Pfam" id="PF08412">
    <property type="entry name" value="Ion_trans_N"/>
    <property type="match status" value="1"/>
</dbReference>
<dbReference type="PRINTS" id="PR01463">
    <property type="entry name" value="EAGCHANLFMLY"/>
</dbReference>
<dbReference type="SMART" id="SM00100">
    <property type="entry name" value="cNMP"/>
    <property type="match status" value="1"/>
</dbReference>
<dbReference type="SUPFAM" id="SSF51206">
    <property type="entry name" value="cAMP-binding domain-like"/>
    <property type="match status" value="1"/>
</dbReference>
<dbReference type="SUPFAM" id="SSF81324">
    <property type="entry name" value="Voltage-gated potassium channels"/>
    <property type="match status" value="1"/>
</dbReference>
<dbReference type="PROSITE" id="PS50042">
    <property type="entry name" value="CNMP_BINDING_3"/>
    <property type="match status" value="1"/>
</dbReference>
<accession>O88705</accession>
<keyword id="KW-0114">cAMP</keyword>
<keyword id="KW-0116">cAMP-binding</keyword>
<keyword id="KW-1003">Cell membrane</keyword>
<keyword id="KW-0325">Glycoprotein</keyword>
<keyword id="KW-0407">Ion channel</keyword>
<keyword id="KW-0406">Ion transport</keyword>
<keyword id="KW-1071">Ligand-gated ion channel</keyword>
<keyword id="KW-0472">Membrane</keyword>
<keyword id="KW-0547">Nucleotide-binding</keyword>
<keyword id="KW-0597">Phosphoprotein</keyword>
<keyword id="KW-0630">Potassium</keyword>
<keyword id="KW-0631">Potassium channel</keyword>
<keyword id="KW-0633">Potassium transport</keyword>
<keyword id="KW-1185">Reference proteome</keyword>
<keyword id="KW-0915">Sodium</keyword>
<keyword id="KW-0894">Sodium channel</keyword>
<keyword id="KW-0739">Sodium transport</keyword>
<keyword id="KW-0812">Transmembrane</keyword>
<keyword id="KW-1133">Transmembrane helix</keyword>
<keyword id="KW-0813">Transport</keyword>
<keyword id="KW-0851">Voltage-gated channel</keyword>
<comment type="function">
    <text evidence="9 10 11 13">Hyperpolarization-activated ion channel that are permeable to sodium and potassium ions, with an about 3:1 preference for potassium ions (PubMed:15923185). Contributes to the native pacemaker currents in heart (If) and in neurons (Ih) (PubMed:21753018, PubMed:21903939, PubMed:31290157). In particular, plays a pivotal role in maintaining excitability and promoting rhythmic burst firing within hypothalamic nuclei (PubMed:31290157). Exerts a significant influence on the configuration of the cardiac action potential waveform (PubMed:21903939). Does not appear to play a prominent role in the processing of acute, neuropathic, or inflammatory pain (PubMed:31290157).</text>
</comment>
<comment type="catalytic activity">
    <reaction evidence="4">
        <text>K(+)(in) = K(+)(out)</text>
        <dbReference type="Rhea" id="RHEA:29463"/>
        <dbReference type="ChEBI" id="CHEBI:29103"/>
    </reaction>
</comment>
<comment type="catalytic activity">
    <reaction evidence="4">
        <text>Na(+)(in) = Na(+)(out)</text>
        <dbReference type="Rhea" id="RHEA:34963"/>
        <dbReference type="ChEBI" id="CHEBI:29101"/>
    </reaction>
</comment>
<comment type="activity regulation">
    <text evidence="9 10 16">Unlike HCN2 and HCN4, HCN3 is insensitive to cyclic nucleotides, such as cAMP or cGMP (PubMed:15923185). This lack of sensitivity of HCN3, despite harboring a functional cyclic nucleotide-binding domain (CNBD), may be explained by its shorter C-terminal sequence, which may alter the normal autoinhibition of the channel (Probable). Inhibited by Cs(1+) and ivabradine (PubMed:15923185). Phosphatidylinositol-4,5-bisphosphate (PIP(2)) shifts HCN3 activation to more depolarized potentials and accelerated activation kinetics (PubMed:21753018).</text>
</comment>
<comment type="subunit">
    <text evidence="5 8 12">Homotetramer. The potassium channel is composed of a homo- or heterotetrameric complex of pore-forming subunits (By similarity). Interacts with HCN1 (PubMed:12928435). Interacts with KCTD3; this interaction increases cell surface expression and current density of this channel (PubMed:23382386). Interacts with PEX5L (PubMed:23382386).</text>
</comment>
<comment type="subcellular location">
    <subcellularLocation>
        <location evidence="8 9 12">Cell membrane</location>
        <topology evidence="6">Multi-pass membrane protein</topology>
    </subcellularLocation>
</comment>
<comment type="tissue specificity">
    <text evidence="9 12 13 14">Detected in hypothalamus, amygdala, olfactory bulb, hippocampus and retina (at protein level). Highly expressed in brain and heart, in particular in ventricle, atrium and in sinoatrial node (SAN). Detected at low levels in skeletal muscle and lung. Expressed in DRG neurons (PubMed:31290157).</text>
</comment>
<comment type="domain">
    <text evidence="2">The segment S4 is the voltage-sensor and is characterized by a series of positively charged amino acids at every third position. The ion-conducting pore region is between segment S5 and S6.</text>
</comment>
<comment type="disruption phenotype">
    <text evidence="11 13">Hcn3-deficient mice are viable and healthy throughout development from embryonic to adult stages with no overt phenotype. No impairment in cardiac function is seen in deficient mice and pacemaker activity is normal, although there is a change in the repolarization rate of the epicardial ventricular action potential, leading to an increase of both the T-wave amplitude at low heart rates (PubMed:21903939). Pain sensitivity both acutely and following neuropathic injury are largely unaffected in Hcn3-deficient mice (PubMed:31290157).</text>
</comment>
<comment type="similarity">
    <text evidence="15">Belongs to the potassium channel HCN family.</text>
</comment>
<feature type="chain" id="PRO_0000054115" description="Potassium/sodium hyperpolarization-activated cyclic nucleotide-gated channel 3">
    <location>
        <begin position="1"/>
        <end position="779"/>
    </location>
</feature>
<feature type="topological domain" description="Cytoplasmic" evidence="2">
    <location>
        <begin position="1"/>
        <end position="96"/>
    </location>
</feature>
<feature type="transmembrane region" description="Helical; Name=Segment S1" evidence="2">
    <location>
        <begin position="97"/>
        <end position="117"/>
    </location>
</feature>
<feature type="topological domain" description="Extracellular" evidence="2">
    <location>
        <begin position="118"/>
        <end position="123"/>
    </location>
</feature>
<feature type="transmembrane region" description="Helical; Name=Segment S2" evidence="2">
    <location>
        <begin position="124"/>
        <end position="144"/>
    </location>
</feature>
<feature type="topological domain" description="Cytoplasmic" evidence="2">
    <location>
        <begin position="145"/>
        <end position="170"/>
    </location>
</feature>
<feature type="transmembrane region" description="Helical; Name=Segment S3" evidence="2">
    <location>
        <begin position="171"/>
        <end position="191"/>
    </location>
</feature>
<feature type="topological domain" description="Extracellular" evidence="2">
    <location>
        <begin position="192"/>
        <end position="200"/>
    </location>
</feature>
<feature type="transmembrane region" description="Helical; Voltage-sensor; Name=Segment S4" evidence="2">
    <location>
        <begin position="201"/>
        <end position="221"/>
    </location>
</feature>
<feature type="topological domain" description="Cytoplasmic" evidence="2">
    <location>
        <begin position="222"/>
        <end position="252"/>
    </location>
</feature>
<feature type="transmembrane region" description="Helical; Name=Segment S5" evidence="2">
    <location>
        <begin position="253"/>
        <end position="273"/>
    </location>
</feature>
<feature type="topological domain" description="Extracellular" evidence="2">
    <location>
        <begin position="274"/>
        <end position="296"/>
    </location>
</feature>
<feature type="intramembrane region" description="Pore-forming; Name=Segment H5" evidence="2">
    <location>
        <begin position="297"/>
        <end position="318"/>
    </location>
</feature>
<feature type="topological domain" description="Extracellular" evidence="2">
    <location>
        <begin position="319"/>
        <end position="328"/>
    </location>
</feature>
<feature type="transmembrane region" description="Helical; Name=Segment S6" evidence="6">
    <location>
        <begin position="329"/>
        <end position="349"/>
    </location>
</feature>
<feature type="topological domain" description="Cytoplasmic" evidence="2 6">
    <location>
        <begin position="350"/>
        <end position="779"/>
    </location>
</feature>
<feature type="region of interest" description="Disordered" evidence="7">
    <location>
        <begin position="1"/>
        <end position="47"/>
    </location>
</feature>
<feature type="region of interest" description="Involved in subunit assembly" evidence="1">
    <location>
        <begin position="45"/>
        <end position="90"/>
    </location>
</feature>
<feature type="region of interest" description="Interaction with KCTD3" evidence="12">
    <location>
        <begin position="353"/>
        <end position="779"/>
    </location>
</feature>
<feature type="region of interest" description="Disordered" evidence="7">
    <location>
        <begin position="549"/>
        <end position="569"/>
    </location>
</feature>
<feature type="region of interest" description="Disordered" evidence="7">
    <location>
        <begin position="687"/>
        <end position="779"/>
    </location>
</feature>
<feature type="compositionally biased region" description="Low complexity" evidence="7">
    <location>
        <begin position="7"/>
        <end position="32"/>
    </location>
</feature>
<feature type="compositionally biased region" description="Polar residues" evidence="7">
    <location>
        <begin position="687"/>
        <end position="697"/>
    </location>
</feature>
<feature type="binding site" evidence="2">
    <location>
        <position position="491"/>
    </location>
    <ligand>
        <name>3',5'-cyclic AMP</name>
        <dbReference type="ChEBI" id="CHEBI:58165"/>
    </ligand>
</feature>
<feature type="binding site" evidence="2">
    <location>
        <position position="492"/>
    </location>
    <ligand>
        <name>3',5'-cyclic AMP</name>
        <dbReference type="ChEBI" id="CHEBI:58165"/>
    </ligand>
</feature>
<feature type="binding site" evidence="2">
    <location>
        <position position="494"/>
    </location>
    <ligand>
        <name>3',5'-cyclic AMP</name>
        <dbReference type="ChEBI" id="CHEBI:58165"/>
    </ligand>
</feature>
<feature type="binding site" evidence="2">
    <location>
        <position position="501"/>
    </location>
    <ligand>
        <name>3',5'-cyclic AMP</name>
        <dbReference type="ChEBI" id="CHEBI:58165"/>
    </ligand>
</feature>
<feature type="binding site" evidence="2">
    <location>
        <position position="502"/>
    </location>
    <ligand>
        <name>3',5'-cyclic AMP</name>
        <dbReference type="ChEBI" id="CHEBI:58165"/>
    </ligand>
</feature>
<feature type="binding site" evidence="3">
    <location>
        <position position="542"/>
    </location>
    <ligand>
        <name>3',5'-cyclic AMP</name>
        <dbReference type="ChEBI" id="CHEBI:58165"/>
    </ligand>
</feature>
<feature type="binding site" evidence="2">
    <location>
        <position position="545"/>
    </location>
    <ligand>
        <name>3',5'-cyclic AMP</name>
        <dbReference type="ChEBI" id="CHEBI:58165"/>
    </ligand>
</feature>
<feature type="modified residue" description="Phosphoserine" evidence="17">
    <location>
        <position position="633"/>
    </location>
</feature>
<feature type="glycosylation site" description="N-linked (GlcNAc...) asparagine" evidence="6">
    <location>
        <position position="290"/>
    </location>
</feature>
<protein>
    <recommendedName>
        <fullName>Potassium/sodium hyperpolarization-activated cyclic nucleotide-gated channel 3</fullName>
    </recommendedName>
    <alternativeName>
        <fullName>Hyperpolarization-activated cation channel 3</fullName>
        <shortName>HAC-3</shortName>
    </alternativeName>
</protein>